<organism>
    <name type="scientific">Desulfitobacterium hafniense (strain DSM 10664 / DCB-2)</name>
    <dbReference type="NCBI Taxonomy" id="272564"/>
    <lineage>
        <taxon>Bacteria</taxon>
        <taxon>Bacillati</taxon>
        <taxon>Bacillota</taxon>
        <taxon>Clostridia</taxon>
        <taxon>Eubacteriales</taxon>
        <taxon>Desulfitobacteriaceae</taxon>
        <taxon>Desulfitobacterium</taxon>
    </lineage>
</organism>
<accession>B8FS78</accession>
<dbReference type="EC" id="2.1.1.192" evidence="1"/>
<dbReference type="EMBL" id="CP001336">
    <property type="protein sequence ID" value="ACL21866.1"/>
    <property type="molecule type" value="Genomic_DNA"/>
</dbReference>
<dbReference type="RefSeq" id="WP_015944840.1">
    <property type="nucleotide sequence ID" value="NC_011830.1"/>
</dbReference>
<dbReference type="SMR" id="B8FS78"/>
<dbReference type="KEGG" id="dhd:Dhaf_3850"/>
<dbReference type="HOGENOM" id="CLU_029101_0_1_9"/>
<dbReference type="Proteomes" id="UP000007726">
    <property type="component" value="Chromosome"/>
</dbReference>
<dbReference type="GO" id="GO:0005737">
    <property type="term" value="C:cytoplasm"/>
    <property type="evidence" value="ECO:0007669"/>
    <property type="project" value="UniProtKB-SubCell"/>
</dbReference>
<dbReference type="GO" id="GO:0051539">
    <property type="term" value="F:4 iron, 4 sulfur cluster binding"/>
    <property type="evidence" value="ECO:0007669"/>
    <property type="project" value="UniProtKB-UniRule"/>
</dbReference>
<dbReference type="GO" id="GO:0046872">
    <property type="term" value="F:metal ion binding"/>
    <property type="evidence" value="ECO:0007669"/>
    <property type="project" value="UniProtKB-KW"/>
</dbReference>
<dbReference type="GO" id="GO:0070040">
    <property type="term" value="F:rRNA (adenine(2503)-C2-)-methyltransferase activity"/>
    <property type="evidence" value="ECO:0007669"/>
    <property type="project" value="UniProtKB-UniRule"/>
</dbReference>
<dbReference type="GO" id="GO:0019843">
    <property type="term" value="F:rRNA binding"/>
    <property type="evidence" value="ECO:0007669"/>
    <property type="project" value="UniProtKB-UniRule"/>
</dbReference>
<dbReference type="GO" id="GO:0002935">
    <property type="term" value="F:tRNA (adenine(37)-C2)-methyltransferase activity"/>
    <property type="evidence" value="ECO:0007669"/>
    <property type="project" value="UniProtKB-UniRule"/>
</dbReference>
<dbReference type="GO" id="GO:0000049">
    <property type="term" value="F:tRNA binding"/>
    <property type="evidence" value="ECO:0007669"/>
    <property type="project" value="UniProtKB-UniRule"/>
</dbReference>
<dbReference type="GO" id="GO:0070475">
    <property type="term" value="P:rRNA base methylation"/>
    <property type="evidence" value="ECO:0007669"/>
    <property type="project" value="UniProtKB-UniRule"/>
</dbReference>
<dbReference type="GO" id="GO:0030488">
    <property type="term" value="P:tRNA methylation"/>
    <property type="evidence" value="ECO:0007669"/>
    <property type="project" value="UniProtKB-UniRule"/>
</dbReference>
<dbReference type="CDD" id="cd01335">
    <property type="entry name" value="Radical_SAM"/>
    <property type="match status" value="1"/>
</dbReference>
<dbReference type="FunFam" id="3.20.20.70:FF:000014">
    <property type="entry name" value="Probable dual-specificity RNA methyltransferase RlmN"/>
    <property type="match status" value="1"/>
</dbReference>
<dbReference type="Gene3D" id="1.10.150.530">
    <property type="match status" value="1"/>
</dbReference>
<dbReference type="Gene3D" id="3.20.20.70">
    <property type="entry name" value="Aldolase class I"/>
    <property type="match status" value="1"/>
</dbReference>
<dbReference type="HAMAP" id="MF_01849">
    <property type="entry name" value="RNA_methyltr_RlmN"/>
    <property type="match status" value="1"/>
</dbReference>
<dbReference type="InterPro" id="IPR013785">
    <property type="entry name" value="Aldolase_TIM"/>
</dbReference>
<dbReference type="InterPro" id="IPR040072">
    <property type="entry name" value="Methyltransferase_A"/>
</dbReference>
<dbReference type="InterPro" id="IPR048641">
    <property type="entry name" value="RlmN_N"/>
</dbReference>
<dbReference type="InterPro" id="IPR027492">
    <property type="entry name" value="RNA_MTrfase_RlmN"/>
</dbReference>
<dbReference type="InterPro" id="IPR004383">
    <property type="entry name" value="rRNA_lsu_MTrfase_RlmN/Cfr"/>
</dbReference>
<dbReference type="InterPro" id="IPR007197">
    <property type="entry name" value="rSAM"/>
</dbReference>
<dbReference type="NCBIfam" id="TIGR00048">
    <property type="entry name" value="rRNA_mod_RlmN"/>
    <property type="match status" value="1"/>
</dbReference>
<dbReference type="PANTHER" id="PTHR30544">
    <property type="entry name" value="23S RRNA METHYLTRANSFERASE"/>
    <property type="match status" value="1"/>
</dbReference>
<dbReference type="PANTHER" id="PTHR30544:SF5">
    <property type="entry name" value="RADICAL SAM CORE DOMAIN-CONTAINING PROTEIN"/>
    <property type="match status" value="1"/>
</dbReference>
<dbReference type="Pfam" id="PF04055">
    <property type="entry name" value="Radical_SAM"/>
    <property type="match status" value="1"/>
</dbReference>
<dbReference type="Pfam" id="PF21016">
    <property type="entry name" value="RlmN_N"/>
    <property type="match status" value="1"/>
</dbReference>
<dbReference type="PIRSF" id="PIRSF006004">
    <property type="entry name" value="CHP00048"/>
    <property type="match status" value="1"/>
</dbReference>
<dbReference type="SFLD" id="SFLDF00275">
    <property type="entry name" value="adenosine_C2_methyltransferase"/>
    <property type="match status" value="1"/>
</dbReference>
<dbReference type="SFLD" id="SFLDS00029">
    <property type="entry name" value="Radical_SAM"/>
    <property type="match status" value="1"/>
</dbReference>
<dbReference type="SUPFAM" id="SSF102114">
    <property type="entry name" value="Radical SAM enzymes"/>
    <property type="match status" value="1"/>
</dbReference>
<dbReference type="PROSITE" id="PS51918">
    <property type="entry name" value="RADICAL_SAM"/>
    <property type="match status" value="1"/>
</dbReference>
<feature type="chain" id="PRO_1000216115" description="Probable dual-specificity RNA methyltransferase RlmN">
    <location>
        <begin position="1"/>
        <end position="357"/>
    </location>
</feature>
<feature type="domain" description="Radical SAM core" evidence="2">
    <location>
        <begin position="106"/>
        <end position="340"/>
    </location>
</feature>
<feature type="active site" description="Proton acceptor" evidence="1">
    <location>
        <position position="95"/>
    </location>
</feature>
<feature type="active site" description="S-methylcysteine intermediate" evidence="1">
    <location>
        <position position="345"/>
    </location>
</feature>
<feature type="binding site" evidence="1">
    <location>
        <position position="120"/>
    </location>
    <ligand>
        <name>[4Fe-4S] cluster</name>
        <dbReference type="ChEBI" id="CHEBI:49883"/>
        <note>4Fe-4S-S-AdoMet</note>
    </ligand>
</feature>
<feature type="binding site" evidence="1">
    <location>
        <position position="124"/>
    </location>
    <ligand>
        <name>[4Fe-4S] cluster</name>
        <dbReference type="ChEBI" id="CHEBI:49883"/>
        <note>4Fe-4S-S-AdoMet</note>
    </ligand>
</feature>
<feature type="binding site" evidence="1">
    <location>
        <position position="127"/>
    </location>
    <ligand>
        <name>[4Fe-4S] cluster</name>
        <dbReference type="ChEBI" id="CHEBI:49883"/>
        <note>4Fe-4S-S-AdoMet</note>
    </ligand>
</feature>
<feature type="binding site" evidence="1">
    <location>
        <begin position="172"/>
        <end position="173"/>
    </location>
    <ligand>
        <name>S-adenosyl-L-methionine</name>
        <dbReference type="ChEBI" id="CHEBI:59789"/>
    </ligand>
</feature>
<feature type="binding site" evidence="1">
    <location>
        <position position="204"/>
    </location>
    <ligand>
        <name>S-adenosyl-L-methionine</name>
        <dbReference type="ChEBI" id="CHEBI:59789"/>
    </ligand>
</feature>
<feature type="binding site" evidence="1">
    <location>
        <begin position="227"/>
        <end position="229"/>
    </location>
    <ligand>
        <name>S-adenosyl-L-methionine</name>
        <dbReference type="ChEBI" id="CHEBI:59789"/>
    </ligand>
</feature>
<feature type="binding site" evidence="1">
    <location>
        <position position="302"/>
    </location>
    <ligand>
        <name>S-adenosyl-L-methionine</name>
        <dbReference type="ChEBI" id="CHEBI:59789"/>
    </ligand>
</feature>
<feature type="disulfide bond" description="(transient)" evidence="1">
    <location>
        <begin position="113"/>
        <end position="345"/>
    </location>
</feature>
<name>RLMN_DESHD</name>
<proteinExistence type="inferred from homology"/>
<keyword id="KW-0004">4Fe-4S</keyword>
<keyword id="KW-0963">Cytoplasm</keyword>
<keyword id="KW-1015">Disulfide bond</keyword>
<keyword id="KW-0408">Iron</keyword>
<keyword id="KW-0411">Iron-sulfur</keyword>
<keyword id="KW-0479">Metal-binding</keyword>
<keyword id="KW-0489">Methyltransferase</keyword>
<keyword id="KW-0698">rRNA processing</keyword>
<keyword id="KW-0949">S-adenosyl-L-methionine</keyword>
<keyword id="KW-0808">Transferase</keyword>
<keyword id="KW-0819">tRNA processing</keyword>
<reference key="1">
    <citation type="journal article" date="2012" name="BMC Microbiol.">
        <title>Genome sequence of Desulfitobacterium hafniense DCB-2, a Gram-positive anaerobe capable of dehalogenation and metal reduction.</title>
        <authorList>
            <person name="Kim S.H."/>
            <person name="Harzman C."/>
            <person name="Davis J.K."/>
            <person name="Hutcheson R."/>
            <person name="Broderick J.B."/>
            <person name="Marsh T.L."/>
            <person name="Tiedje J.M."/>
        </authorList>
    </citation>
    <scope>NUCLEOTIDE SEQUENCE [LARGE SCALE GENOMIC DNA]</scope>
    <source>
        <strain>DSM 10664 / DCB-2</strain>
    </source>
</reference>
<gene>
    <name evidence="1" type="primary">rlmN</name>
    <name type="ordered locus">Dhaf_3850</name>
</gene>
<sequence length="357" mass="39911">MNTMKRMDCRDLNQSELTQHCAELGLPKFRGRQVFQWVQQKAVQNWEELRNIGAGDRQKLQEGLFLQPLRKVREQIAQDGTRKFLFRCADGETLECVLMDYDRRKNRDRHTVCVSTQIGCAVGCAFCATGLGGWRRNLSPGEILGQVLDITYLMRQEDPDFQVTNIVFMGMGEPLLNYEAVLKAIELLNDPEGQGIGMRRMTISTSGVAPKIRQLAKDNPQVGLAVSLHSAHNTTRDQLIPMNRKYPLEELMEACGDYTTLTNRRITFEIALISGQATLEAAQAVGHLLKGQLAHVNLIPVNPVAGTGMARPTAKEVQQFAQSLESMGIPVSVREEKGTDIDAACGQLRRQLECEQK</sequence>
<evidence type="ECO:0000255" key="1">
    <source>
        <dbReference type="HAMAP-Rule" id="MF_01849"/>
    </source>
</evidence>
<evidence type="ECO:0000255" key="2">
    <source>
        <dbReference type="PROSITE-ProRule" id="PRU01266"/>
    </source>
</evidence>
<comment type="function">
    <text evidence="1">Specifically methylates position 2 of adenine 2503 in 23S rRNA and position 2 of adenine 37 in tRNAs.</text>
</comment>
<comment type="catalytic activity">
    <reaction evidence="1">
        <text>adenosine(2503) in 23S rRNA + 2 reduced [2Fe-2S]-[ferredoxin] + 2 S-adenosyl-L-methionine = 2-methyladenosine(2503) in 23S rRNA + 5'-deoxyadenosine + L-methionine + 2 oxidized [2Fe-2S]-[ferredoxin] + S-adenosyl-L-homocysteine</text>
        <dbReference type="Rhea" id="RHEA:42916"/>
        <dbReference type="Rhea" id="RHEA-COMP:10000"/>
        <dbReference type="Rhea" id="RHEA-COMP:10001"/>
        <dbReference type="Rhea" id="RHEA-COMP:10152"/>
        <dbReference type="Rhea" id="RHEA-COMP:10282"/>
        <dbReference type="ChEBI" id="CHEBI:17319"/>
        <dbReference type="ChEBI" id="CHEBI:33737"/>
        <dbReference type="ChEBI" id="CHEBI:33738"/>
        <dbReference type="ChEBI" id="CHEBI:57844"/>
        <dbReference type="ChEBI" id="CHEBI:57856"/>
        <dbReference type="ChEBI" id="CHEBI:59789"/>
        <dbReference type="ChEBI" id="CHEBI:74411"/>
        <dbReference type="ChEBI" id="CHEBI:74497"/>
        <dbReference type="EC" id="2.1.1.192"/>
    </reaction>
</comment>
<comment type="catalytic activity">
    <reaction evidence="1">
        <text>adenosine(37) in tRNA + 2 reduced [2Fe-2S]-[ferredoxin] + 2 S-adenosyl-L-methionine = 2-methyladenosine(37) in tRNA + 5'-deoxyadenosine + L-methionine + 2 oxidized [2Fe-2S]-[ferredoxin] + S-adenosyl-L-homocysteine</text>
        <dbReference type="Rhea" id="RHEA:43332"/>
        <dbReference type="Rhea" id="RHEA-COMP:10000"/>
        <dbReference type="Rhea" id="RHEA-COMP:10001"/>
        <dbReference type="Rhea" id="RHEA-COMP:10162"/>
        <dbReference type="Rhea" id="RHEA-COMP:10485"/>
        <dbReference type="ChEBI" id="CHEBI:17319"/>
        <dbReference type="ChEBI" id="CHEBI:33737"/>
        <dbReference type="ChEBI" id="CHEBI:33738"/>
        <dbReference type="ChEBI" id="CHEBI:57844"/>
        <dbReference type="ChEBI" id="CHEBI:57856"/>
        <dbReference type="ChEBI" id="CHEBI:59789"/>
        <dbReference type="ChEBI" id="CHEBI:74411"/>
        <dbReference type="ChEBI" id="CHEBI:74497"/>
        <dbReference type="EC" id="2.1.1.192"/>
    </reaction>
</comment>
<comment type="cofactor">
    <cofactor evidence="1">
        <name>[4Fe-4S] cluster</name>
        <dbReference type="ChEBI" id="CHEBI:49883"/>
    </cofactor>
    <text evidence="1">Binds 1 [4Fe-4S] cluster. The cluster is coordinated with 3 cysteines and an exchangeable S-adenosyl-L-methionine.</text>
</comment>
<comment type="subcellular location">
    <subcellularLocation>
        <location evidence="1">Cytoplasm</location>
    </subcellularLocation>
</comment>
<comment type="miscellaneous">
    <text evidence="1">Reaction proceeds by a ping-pong mechanism involving intermediate methylation of a conserved cysteine residue.</text>
</comment>
<comment type="similarity">
    <text evidence="1">Belongs to the radical SAM superfamily. RlmN family.</text>
</comment>
<protein>
    <recommendedName>
        <fullName evidence="1">Probable dual-specificity RNA methyltransferase RlmN</fullName>
        <ecNumber evidence="1">2.1.1.192</ecNumber>
    </recommendedName>
    <alternativeName>
        <fullName evidence="1">23S rRNA (adenine(2503)-C(2))-methyltransferase</fullName>
    </alternativeName>
    <alternativeName>
        <fullName evidence="1">23S rRNA m2A2503 methyltransferase</fullName>
    </alternativeName>
    <alternativeName>
        <fullName evidence="1">Ribosomal RNA large subunit methyltransferase N</fullName>
    </alternativeName>
    <alternativeName>
        <fullName evidence="1">tRNA (adenine(37)-C(2))-methyltransferase</fullName>
    </alternativeName>
    <alternativeName>
        <fullName evidence="1">tRNA m2A37 methyltransferase</fullName>
    </alternativeName>
</protein>